<accession>A8M5E7</accession>
<keyword id="KW-0067">ATP-binding</keyword>
<keyword id="KW-0436">Ligase</keyword>
<keyword id="KW-0547">Nucleotide-binding</keyword>
<keyword id="KW-0648">Protein biosynthesis</keyword>
<feature type="chain" id="PRO_1000095241" description="Aspartyl/glutamyl-tRNA(Asn/Gln) amidotransferase subunit B">
    <location>
        <begin position="1"/>
        <end position="499"/>
    </location>
</feature>
<dbReference type="EC" id="6.3.5.-" evidence="1"/>
<dbReference type="EMBL" id="CP000850">
    <property type="protein sequence ID" value="ABV97021.1"/>
    <property type="molecule type" value="Genomic_DNA"/>
</dbReference>
<dbReference type="SMR" id="A8M5E7"/>
<dbReference type="STRING" id="391037.Sare_1113"/>
<dbReference type="KEGG" id="saq:Sare_1113"/>
<dbReference type="PATRIC" id="fig|391037.6.peg.1129"/>
<dbReference type="eggNOG" id="COG0064">
    <property type="taxonomic scope" value="Bacteria"/>
</dbReference>
<dbReference type="HOGENOM" id="CLU_019240_0_0_11"/>
<dbReference type="OrthoDB" id="9804078at2"/>
<dbReference type="GO" id="GO:0050566">
    <property type="term" value="F:asparaginyl-tRNA synthase (glutamine-hydrolyzing) activity"/>
    <property type="evidence" value="ECO:0007669"/>
    <property type="project" value="RHEA"/>
</dbReference>
<dbReference type="GO" id="GO:0005524">
    <property type="term" value="F:ATP binding"/>
    <property type="evidence" value="ECO:0007669"/>
    <property type="project" value="UniProtKB-KW"/>
</dbReference>
<dbReference type="GO" id="GO:0050567">
    <property type="term" value="F:glutaminyl-tRNA synthase (glutamine-hydrolyzing) activity"/>
    <property type="evidence" value="ECO:0007669"/>
    <property type="project" value="UniProtKB-UniRule"/>
</dbReference>
<dbReference type="GO" id="GO:0070681">
    <property type="term" value="P:glutaminyl-tRNAGln biosynthesis via transamidation"/>
    <property type="evidence" value="ECO:0007669"/>
    <property type="project" value="TreeGrafter"/>
</dbReference>
<dbReference type="GO" id="GO:0006412">
    <property type="term" value="P:translation"/>
    <property type="evidence" value="ECO:0007669"/>
    <property type="project" value="UniProtKB-UniRule"/>
</dbReference>
<dbReference type="FunFam" id="1.10.10.410:FF:000002">
    <property type="entry name" value="Aspartyl/glutamyl-tRNA(Asn/Gln) amidotransferase subunit B"/>
    <property type="match status" value="1"/>
</dbReference>
<dbReference type="Gene3D" id="1.10.10.410">
    <property type="match status" value="1"/>
</dbReference>
<dbReference type="HAMAP" id="MF_00121">
    <property type="entry name" value="GatB"/>
    <property type="match status" value="1"/>
</dbReference>
<dbReference type="InterPro" id="IPR017959">
    <property type="entry name" value="Asn/Gln-tRNA_amidoTrfase_suB/E"/>
</dbReference>
<dbReference type="InterPro" id="IPR006075">
    <property type="entry name" value="Asn/Gln-tRNA_Trfase_suB/E_cat"/>
</dbReference>
<dbReference type="InterPro" id="IPR018027">
    <property type="entry name" value="Asn/Gln_amidotransferase"/>
</dbReference>
<dbReference type="InterPro" id="IPR003789">
    <property type="entry name" value="Asn/Gln_tRNA_amidoTrase-B-like"/>
</dbReference>
<dbReference type="InterPro" id="IPR004413">
    <property type="entry name" value="GatB"/>
</dbReference>
<dbReference type="InterPro" id="IPR023168">
    <property type="entry name" value="GatB_Yqey_C_2"/>
</dbReference>
<dbReference type="InterPro" id="IPR017958">
    <property type="entry name" value="Gln-tRNA_amidoTrfase_suB_CS"/>
</dbReference>
<dbReference type="InterPro" id="IPR014746">
    <property type="entry name" value="Gln_synth/guanido_kin_cat_dom"/>
</dbReference>
<dbReference type="NCBIfam" id="TIGR00133">
    <property type="entry name" value="gatB"/>
    <property type="match status" value="1"/>
</dbReference>
<dbReference type="NCBIfam" id="NF004012">
    <property type="entry name" value="PRK05477.1-2"/>
    <property type="match status" value="1"/>
</dbReference>
<dbReference type="NCBIfam" id="NF004013">
    <property type="entry name" value="PRK05477.1-3"/>
    <property type="match status" value="1"/>
</dbReference>
<dbReference type="NCBIfam" id="NF004014">
    <property type="entry name" value="PRK05477.1-4"/>
    <property type="match status" value="1"/>
</dbReference>
<dbReference type="PANTHER" id="PTHR11659">
    <property type="entry name" value="GLUTAMYL-TRNA GLN AMIDOTRANSFERASE SUBUNIT B MITOCHONDRIAL AND PROKARYOTIC PET112-RELATED"/>
    <property type="match status" value="1"/>
</dbReference>
<dbReference type="PANTHER" id="PTHR11659:SF0">
    <property type="entry name" value="GLUTAMYL-TRNA(GLN) AMIDOTRANSFERASE SUBUNIT B, MITOCHONDRIAL"/>
    <property type="match status" value="1"/>
</dbReference>
<dbReference type="Pfam" id="PF02934">
    <property type="entry name" value="GatB_N"/>
    <property type="match status" value="1"/>
</dbReference>
<dbReference type="Pfam" id="PF02637">
    <property type="entry name" value="GatB_Yqey"/>
    <property type="match status" value="1"/>
</dbReference>
<dbReference type="SMART" id="SM00845">
    <property type="entry name" value="GatB_Yqey"/>
    <property type="match status" value="1"/>
</dbReference>
<dbReference type="SUPFAM" id="SSF89095">
    <property type="entry name" value="GatB/YqeY motif"/>
    <property type="match status" value="1"/>
</dbReference>
<dbReference type="SUPFAM" id="SSF55931">
    <property type="entry name" value="Glutamine synthetase/guanido kinase"/>
    <property type="match status" value="1"/>
</dbReference>
<dbReference type="PROSITE" id="PS01234">
    <property type="entry name" value="GATB"/>
    <property type="match status" value="1"/>
</dbReference>
<gene>
    <name evidence="1" type="primary">gatB</name>
    <name type="ordered locus">Sare_1113</name>
</gene>
<comment type="function">
    <text evidence="1">Allows the formation of correctly charged Asn-tRNA(Asn) or Gln-tRNA(Gln) through the transamidation of misacylated Asp-tRNA(Asn) or Glu-tRNA(Gln) in organisms which lack either or both of asparaginyl-tRNA or glutaminyl-tRNA synthetases. The reaction takes place in the presence of glutamine and ATP through an activated phospho-Asp-tRNA(Asn) or phospho-Glu-tRNA(Gln).</text>
</comment>
<comment type="catalytic activity">
    <reaction evidence="1">
        <text>L-glutamyl-tRNA(Gln) + L-glutamine + ATP + H2O = L-glutaminyl-tRNA(Gln) + L-glutamate + ADP + phosphate + H(+)</text>
        <dbReference type="Rhea" id="RHEA:17521"/>
        <dbReference type="Rhea" id="RHEA-COMP:9681"/>
        <dbReference type="Rhea" id="RHEA-COMP:9684"/>
        <dbReference type="ChEBI" id="CHEBI:15377"/>
        <dbReference type="ChEBI" id="CHEBI:15378"/>
        <dbReference type="ChEBI" id="CHEBI:29985"/>
        <dbReference type="ChEBI" id="CHEBI:30616"/>
        <dbReference type="ChEBI" id="CHEBI:43474"/>
        <dbReference type="ChEBI" id="CHEBI:58359"/>
        <dbReference type="ChEBI" id="CHEBI:78520"/>
        <dbReference type="ChEBI" id="CHEBI:78521"/>
        <dbReference type="ChEBI" id="CHEBI:456216"/>
    </reaction>
</comment>
<comment type="catalytic activity">
    <reaction evidence="1">
        <text>L-aspartyl-tRNA(Asn) + L-glutamine + ATP + H2O = L-asparaginyl-tRNA(Asn) + L-glutamate + ADP + phosphate + 2 H(+)</text>
        <dbReference type="Rhea" id="RHEA:14513"/>
        <dbReference type="Rhea" id="RHEA-COMP:9674"/>
        <dbReference type="Rhea" id="RHEA-COMP:9677"/>
        <dbReference type="ChEBI" id="CHEBI:15377"/>
        <dbReference type="ChEBI" id="CHEBI:15378"/>
        <dbReference type="ChEBI" id="CHEBI:29985"/>
        <dbReference type="ChEBI" id="CHEBI:30616"/>
        <dbReference type="ChEBI" id="CHEBI:43474"/>
        <dbReference type="ChEBI" id="CHEBI:58359"/>
        <dbReference type="ChEBI" id="CHEBI:78515"/>
        <dbReference type="ChEBI" id="CHEBI:78516"/>
        <dbReference type="ChEBI" id="CHEBI:456216"/>
    </reaction>
</comment>
<comment type="subunit">
    <text evidence="1">Heterotrimer of A, B and C subunits.</text>
</comment>
<comment type="similarity">
    <text evidence="1">Belongs to the GatB/GatE family. GatB subfamily.</text>
</comment>
<evidence type="ECO:0000255" key="1">
    <source>
        <dbReference type="HAMAP-Rule" id="MF_00121"/>
    </source>
</evidence>
<sequence>MTTTLPAYDEVVPRYEPVIGLETHVELGTNTKMFCGCPTDFGGAPNTRVCPVCLGLPGSLPVANRAAVEATIRIGLALNCSIAQWCRFARKNYYYPDMPKNFQISQYDEPLCVDGYLDVEVNGEPVRIGIERVHLEEDTGKTLHVGGATGRIHGATESLVDYNRAGIPLVEIVTKPIPGTGAMAPEVARAYVTELRDVLRSLGVSDVRMEEGSLRCDVNTSLNPPGEQWGTRTETKNVNSLRSVERAVRSEMIRQASVLDAGGRIVQETRHFHEETGDTTSGRSKETATDYRYFPEPDLVPIAPDPTWVAELKAELPELPRLHRRRLQQEWGLSDLDMQSILNAGAVELIEATIAAGATPAAARKWWLGELSRRANETGAELADIGATPGQVAELQGLVDAGKLTDKLARTVLEHVVAGEGSPAEIMAARNLEVVSDTGALTAAVDEAIAANPAIADKVRGGKVAAAGALVGAVMKTTRGQADAKTVRELILERLGAQG</sequence>
<reference key="1">
    <citation type="submission" date="2007-10" db="EMBL/GenBank/DDBJ databases">
        <title>Complete sequence of Salinispora arenicola CNS-205.</title>
        <authorList>
            <consortium name="US DOE Joint Genome Institute"/>
            <person name="Copeland A."/>
            <person name="Lucas S."/>
            <person name="Lapidus A."/>
            <person name="Barry K."/>
            <person name="Glavina del Rio T."/>
            <person name="Dalin E."/>
            <person name="Tice H."/>
            <person name="Pitluck S."/>
            <person name="Foster B."/>
            <person name="Schmutz J."/>
            <person name="Larimer F."/>
            <person name="Land M."/>
            <person name="Hauser L."/>
            <person name="Kyrpides N."/>
            <person name="Ivanova N."/>
            <person name="Jensen P.R."/>
            <person name="Moore B.S."/>
            <person name="Penn K."/>
            <person name="Jenkins C."/>
            <person name="Udwary D."/>
            <person name="Xiang L."/>
            <person name="Gontang E."/>
            <person name="Richardson P."/>
        </authorList>
    </citation>
    <scope>NUCLEOTIDE SEQUENCE [LARGE SCALE GENOMIC DNA]</scope>
    <source>
        <strain>CNS-205</strain>
    </source>
</reference>
<name>GATB_SALAI</name>
<protein>
    <recommendedName>
        <fullName evidence="1">Aspartyl/glutamyl-tRNA(Asn/Gln) amidotransferase subunit B</fullName>
        <shortName evidence="1">Asp/Glu-ADT subunit B</shortName>
        <ecNumber evidence="1">6.3.5.-</ecNumber>
    </recommendedName>
</protein>
<proteinExistence type="inferred from homology"/>
<organism>
    <name type="scientific">Salinispora arenicola (strain CNS-205)</name>
    <dbReference type="NCBI Taxonomy" id="391037"/>
    <lineage>
        <taxon>Bacteria</taxon>
        <taxon>Bacillati</taxon>
        <taxon>Actinomycetota</taxon>
        <taxon>Actinomycetes</taxon>
        <taxon>Micromonosporales</taxon>
        <taxon>Micromonosporaceae</taxon>
        <taxon>Salinispora</taxon>
    </lineage>
</organism>